<organism>
    <name type="scientific">Alkalilimnicola ehrlichii (strain ATCC BAA-1101 / DSM 17681 / MLHE-1)</name>
    <dbReference type="NCBI Taxonomy" id="187272"/>
    <lineage>
        <taxon>Bacteria</taxon>
        <taxon>Pseudomonadati</taxon>
        <taxon>Pseudomonadota</taxon>
        <taxon>Gammaproteobacteria</taxon>
        <taxon>Chromatiales</taxon>
        <taxon>Ectothiorhodospiraceae</taxon>
        <taxon>Alkalilimnicola</taxon>
    </lineage>
</organism>
<comment type="function">
    <text evidence="1">Catalyzes the acyloin condensation reaction between C atoms 2 and 3 of pyruvate and glyceraldehyde 3-phosphate to yield 1-deoxy-D-xylulose-5-phosphate (DXP).</text>
</comment>
<comment type="catalytic activity">
    <reaction evidence="1">
        <text>D-glyceraldehyde 3-phosphate + pyruvate + H(+) = 1-deoxy-D-xylulose 5-phosphate + CO2</text>
        <dbReference type="Rhea" id="RHEA:12605"/>
        <dbReference type="ChEBI" id="CHEBI:15361"/>
        <dbReference type="ChEBI" id="CHEBI:15378"/>
        <dbReference type="ChEBI" id="CHEBI:16526"/>
        <dbReference type="ChEBI" id="CHEBI:57792"/>
        <dbReference type="ChEBI" id="CHEBI:59776"/>
        <dbReference type="EC" id="2.2.1.7"/>
    </reaction>
</comment>
<comment type="cofactor">
    <cofactor evidence="1">
        <name>Mg(2+)</name>
        <dbReference type="ChEBI" id="CHEBI:18420"/>
    </cofactor>
    <text evidence="1">Binds 1 Mg(2+) ion per subunit.</text>
</comment>
<comment type="cofactor">
    <cofactor evidence="1">
        <name>thiamine diphosphate</name>
        <dbReference type="ChEBI" id="CHEBI:58937"/>
    </cofactor>
    <text evidence="1">Binds 1 thiamine pyrophosphate per subunit.</text>
</comment>
<comment type="pathway">
    <text evidence="1">Metabolic intermediate biosynthesis; 1-deoxy-D-xylulose 5-phosphate biosynthesis; 1-deoxy-D-xylulose 5-phosphate from D-glyceraldehyde 3-phosphate and pyruvate: step 1/1.</text>
</comment>
<comment type="subunit">
    <text evidence="1">Homodimer.</text>
</comment>
<comment type="similarity">
    <text evidence="1">Belongs to the transketolase family. DXPS subfamily.</text>
</comment>
<sequence length="628" mass="67680">MSVSIDDYPLLAQVPDPEALRTLPAHRLPALAKELRHYLLHSVARSGGHLAAGLGAVELTLALHYVFNTPEDRLVWDVGHQCYPHKILTGRRERLGTIRKYGGLAGFPKRAESPYDTFGVGHSSTSISAALGMALAARQAGEQRKAVAIIGDGGMTAGEAFEAMNHAGDAGADLLVVLNDNEMSISENVGALSQHLTRILSGRWYHQLRSGSKEVLRRLPPPVHELARRTEEHLKGMVVPGTLFEELGFQYFGPVDGHNVDALVEVLGNLAHQRGPRLLHVVTCKGKGYRPAEQDPIAYHGVGQFDPEQGLPKKSGGSLAYNQVFGRWLCAMAEQDPRLVAITPAMREGSGMVEYARRFPERYHDVGIAEQHAVTLAAGLACESVKPVLAIYSTFLQRGYDQLVHDVALQNLPVLFAVDRAGLVGADGPTHHGSFDLSYLRCVPNMTIAAPSDEAECWRLLSTGYHHDGPFAVRYPRGSGPGAALPEADLDPLAIGKGVCRRRGRRIAVLAFGTLVVPALAVAEALDLTVADMRFVRPLDEALIRELADTHDLLVTVEENAVAGGAGSGVSEYLARAGLDVPVRHLGLPDRFVDHGTPAELLAEVGLDEAGLQRSLQGWLDTLPGASR</sequence>
<protein>
    <recommendedName>
        <fullName evidence="1">1-deoxy-D-xylulose-5-phosphate synthase</fullName>
        <ecNumber evidence="1">2.2.1.7</ecNumber>
    </recommendedName>
    <alternativeName>
        <fullName evidence="1">1-deoxyxylulose-5-phosphate synthase</fullName>
        <shortName evidence="1">DXP synthase</shortName>
        <shortName evidence="1">DXPS</shortName>
    </alternativeName>
</protein>
<reference key="1">
    <citation type="submission" date="2006-08" db="EMBL/GenBank/DDBJ databases">
        <title>Complete sequence of Alkalilimnicola ehrilichei MLHE-1.</title>
        <authorList>
            <person name="Copeland A."/>
            <person name="Lucas S."/>
            <person name="Lapidus A."/>
            <person name="Barry K."/>
            <person name="Detter J.C."/>
            <person name="Glavina del Rio T."/>
            <person name="Hammon N."/>
            <person name="Israni S."/>
            <person name="Dalin E."/>
            <person name="Tice H."/>
            <person name="Pitluck S."/>
            <person name="Sims D."/>
            <person name="Brettin T."/>
            <person name="Bruce D."/>
            <person name="Han C."/>
            <person name="Tapia R."/>
            <person name="Gilna P."/>
            <person name="Schmutz J."/>
            <person name="Larimer F."/>
            <person name="Land M."/>
            <person name="Hauser L."/>
            <person name="Kyrpides N."/>
            <person name="Mikhailova N."/>
            <person name="Oremland R.S."/>
            <person name="Hoeft S.E."/>
            <person name="Switzer-Blum J."/>
            <person name="Kulp T."/>
            <person name="King G."/>
            <person name="Tabita R."/>
            <person name="Witte B."/>
            <person name="Santini J.M."/>
            <person name="Basu P."/>
            <person name="Hollibaugh J.T."/>
            <person name="Xie G."/>
            <person name="Stolz J.F."/>
            <person name="Richardson P."/>
        </authorList>
    </citation>
    <scope>NUCLEOTIDE SEQUENCE [LARGE SCALE GENOMIC DNA]</scope>
    <source>
        <strain>ATCC BAA-1101 / DSM 17681 / MLHE-1</strain>
    </source>
</reference>
<keyword id="KW-0414">Isoprene biosynthesis</keyword>
<keyword id="KW-0460">Magnesium</keyword>
<keyword id="KW-0479">Metal-binding</keyword>
<keyword id="KW-1185">Reference proteome</keyword>
<keyword id="KW-0784">Thiamine biosynthesis</keyword>
<keyword id="KW-0786">Thiamine pyrophosphate</keyword>
<keyword id="KW-0808">Transferase</keyword>
<proteinExistence type="inferred from homology"/>
<accession>Q0A8V7</accession>
<dbReference type="EC" id="2.2.1.7" evidence="1"/>
<dbReference type="EMBL" id="CP000453">
    <property type="protein sequence ID" value="ABI56730.1"/>
    <property type="molecule type" value="Genomic_DNA"/>
</dbReference>
<dbReference type="RefSeq" id="WP_011629125.1">
    <property type="nucleotide sequence ID" value="NC_008340.1"/>
</dbReference>
<dbReference type="SMR" id="Q0A8V7"/>
<dbReference type="KEGG" id="aeh:Mlg_1381"/>
<dbReference type="eggNOG" id="COG1154">
    <property type="taxonomic scope" value="Bacteria"/>
</dbReference>
<dbReference type="HOGENOM" id="CLU_009227_1_4_6"/>
<dbReference type="OrthoDB" id="9803371at2"/>
<dbReference type="UniPathway" id="UPA00064">
    <property type="reaction ID" value="UER00091"/>
</dbReference>
<dbReference type="Proteomes" id="UP000001962">
    <property type="component" value="Chromosome"/>
</dbReference>
<dbReference type="GO" id="GO:0005829">
    <property type="term" value="C:cytosol"/>
    <property type="evidence" value="ECO:0007669"/>
    <property type="project" value="TreeGrafter"/>
</dbReference>
<dbReference type="GO" id="GO:0008661">
    <property type="term" value="F:1-deoxy-D-xylulose-5-phosphate synthase activity"/>
    <property type="evidence" value="ECO:0007669"/>
    <property type="project" value="UniProtKB-UniRule"/>
</dbReference>
<dbReference type="GO" id="GO:0000287">
    <property type="term" value="F:magnesium ion binding"/>
    <property type="evidence" value="ECO:0007669"/>
    <property type="project" value="UniProtKB-UniRule"/>
</dbReference>
<dbReference type="GO" id="GO:0030976">
    <property type="term" value="F:thiamine pyrophosphate binding"/>
    <property type="evidence" value="ECO:0007669"/>
    <property type="project" value="UniProtKB-UniRule"/>
</dbReference>
<dbReference type="GO" id="GO:0052865">
    <property type="term" value="P:1-deoxy-D-xylulose 5-phosphate biosynthetic process"/>
    <property type="evidence" value="ECO:0007669"/>
    <property type="project" value="UniProtKB-UniPathway"/>
</dbReference>
<dbReference type="GO" id="GO:0019288">
    <property type="term" value="P:isopentenyl diphosphate biosynthetic process, methylerythritol 4-phosphate pathway"/>
    <property type="evidence" value="ECO:0007669"/>
    <property type="project" value="TreeGrafter"/>
</dbReference>
<dbReference type="GO" id="GO:0016114">
    <property type="term" value="P:terpenoid biosynthetic process"/>
    <property type="evidence" value="ECO:0007669"/>
    <property type="project" value="UniProtKB-UniRule"/>
</dbReference>
<dbReference type="GO" id="GO:0009228">
    <property type="term" value="P:thiamine biosynthetic process"/>
    <property type="evidence" value="ECO:0007669"/>
    <property type="project" value="UniProtKB-UniRule"/>
</dbReference>
<dbReference type="CDD" id="cd02007">
    <property type="entry name" value="TPP_DXS"/>
    <property type="match status" value="1"/>
</dbReference>
<dbReference type="CDD" id="cd07033">
    <property type="entry name" value="TPP_PYR_DXS_TK_like"/>
    <property type="match status" value="1"/>
</dbReference>
<dbReference type="FunFam" id="3.40.50.920:FF:000002">
    <property type="entry name" value="1-deoxy-D-xylulose-5-phosphate synthase"/>
    <property type="match status" value="1"/>
</dbReference>
<dbReference type="FunFam" id="3.40.50.970:FF:000005">
    <property type="entry name" value="1-deoxy-D-xylulose-5-phosphate synthase"/>
    <property type="match status" value="1"/>
</dbReference>
<dbReference type="Gene3D" id="3.40.50.920">
    <property type="match status" value="1"/>
</dbReference>
<dbReference type="Gene3D" id="3.40.50.970">
    <property type="match status" value="2"/>
</dbReference>
<dbReference type="HAMAP" id="MF_00315">
    <property type="entry name" value="DXP_synth"/>
    <property type="match status" value="1"/>
</dbReference>
<dbReference type="InterPro" id="IPR005477">
    <property type="entry name" value="Dxylulose-5-P_synthase"/>
</dbReference>
<dbReference type="InterPro" id="IPR029061">
    <property type="entry name" value="THDP-binding"/>
</dbReference>
<dbReference type="InterPro" id="IPR009014">
    <property type="entry name" value="Transketo_C/PFOR_II"/>
</dbReference>
<dbReference type="InterPro" id="IPR005475">
    <property type="entry name" value="Transketolase-like_Pyr-bd"/>
</dbReference>
<dbReference type="InterPro" id="IPR020826">
    <property type="entry name" value="Transketolase_BS"/>
</dbReference>
<dbReference type="InterPro" id="IPR033248">
    <property type="entry name" value="Transketolase_C"/>
</dbReference>
<dbReference type="InterPro" id="IPR049557">
    <property type="entry name" value="Transketolase_CS"/>
</dbReference>
<dbReference type="NCBIfam" id="TIGR00204">
    <property type="entry name" value="dxs"/>
    <property type="match status" value="1"/>
</dbReference>
<dbReference type="NCBIfam" id="NF003933">
    <property type="entry name" value="PRK05444.2-2"/>
    <property type="match status" value="1"/>
</dbReference>
<dbReference type="PANTHER" id="PTHR43322">
    <property type="entry name" value="1-D-DEOXYXYLULOSE 5-PHOSPHATE SYNTHASE-RELATED"/>
    <property type="match status" value="1"/>
</dbReference>
<dbReference type="PANTHER" id="PTHR43322:SF5">
    <property type="entry name" value="1-DEOXY-D-XYLULOSE-5-PHOSPHATE SYNTHASE, CHLOROPLASTIC"/>
    <property type="match status" value="1"/>
</dbReference>
<dbReference type="Pfam" id="PF13292">
    <property type="entry name" value="DXP_synthase_N"/>
    <property type="match status" value="1"/>
</dbReference>
<dbReference type="Pfam" id="PF02779">
    <property type="entry name" value="Transket_pyr"/>
    <property type="match status" value="1"/>
</dbReference>
<dbReference type="Pfam" id="PF02780">
    <property type="entry name" value="Transketolase_C"/>
    <property type="match status" value="1"/>
</dbReference>
<dbReference type="SMART" id="SM00861">
    <property type="entry name" value="Transket_pyr"/>
    <property type="match status" value="1"/>
</dbReference>
<dbReference type="SUPFAM" id="SSF52518">
    <property type="entry name" value="Thiamin diphosphate-binding fold (THDP-binding)"/>
    <property type="match status" value="2"/>
</dbReference>
<dbReference type="SUPFAM" id="SSF52922">
    <property type="entry name" value="TK C-terminal domain-like"/>
    <property type="match status" value="1"/>
</dbReference>
<dbReference type="PROSITE" id="PS00801">
    <property type="entry name" value="TRANSKETOLASE_1"/>
    <property type="match status" value="1"/>
</dbReference>
<dbReference type="PROSITE" id="PS00802">
    <property type="entry name" value="TRANSKETOLASE_2"/>
    <property type="match status" value="1"/>
</dbReference>
<feature type="chain" id="PRO_1000019003" description="1-deoxy-D-xylulose-5-phosphate synthase">
    <location>
        <begin position="1"/>
        <end position="628"/>
    </location>
</feature>
<feature type="binding site" evidence="1">
    <location>
        <position position="80"/>
    </location>
    <ligand>
        <name>thiamine diphosphate</name>
        <dbReference type="ChEBI" id="CHEBI:58937"/>
    </ligand>
</feature>
<feature type="binding site" evidence="1">
    <location>
        <begin position="121"/>
        <end position="123"/>
    </location>
    <ligand>
        <name>thiamine diphosphate</name>
        <dbReference type="ChEBI" id="CHEBI:58937"/>
    </ligand>
</feature>
<feature type="binding site" evidence="1">
    <location>
        <position position="152"/>
    </location>
    <ligand>
        <name>Mg(2+)</name>
        <dbReference type="ChEBI" id="CHEBI:18420"/>
    </ligand>
</feature>
<feature type="binding site" evidence="1">
    <location>
        <begin position="153"/>
        <end position="154"/>
    </location>
    <ligand>
        <name>thiamine diphosphate</name>
        <dbReference type="ChEBI" id="CHEBI:58937"/>
    </ligand>
</feature>
<feature type="binding site" evidence="1">
    <location>
        <position position="181"/>
    </location>
    <ligand>
        <name>Mg(2+)</name>
        <dbReference type="ChEBI" id="CHEBI:18420"/>
    </ligand>
</feature>
<feature type="binding site" evidence="1">
    <location>
        <position position="181"/>
    </location>
    <ligand>
        <name>thiamine diphosphate</name>
        <dbReference type="ChEBI" id="CHEBI:58937"/>
    </ligand>
</feature>
<feature type="binding site" evidence="1">
    <location>
        <position position="289"/>
    </location>
    <ligand>
        <name>thiamine diphosphate</name>
        <dbReference type="ChEBI" id="CHEBI:58937"/>
    </ligand>
</feature>
<feature type="binding site" evidence="1">
    <location>
        <position position="370"/>
    </location>
    <ligand>
        <name>thiamine diphosphate</name>
        <dbReference type="ChEBI" id="CHEBI:58937"/>
    </ligand>
</feature>
<gene>
    <name evidence="1" type="primary">dxs</name>
    <name type="ordered locus">Mlg_1381</name>
</gene>
<name>DXS_ALKEH</name>
<evidence type="ECO:0000255" key="1">
    <source>
        <dbReference type="HAMAP-Rule" id="MF_00315"/>
    </source>
</evidence>